<sequence length="216" mass="24601">MGQKTHPTGFRIGINKSHDSTWFANYGTYGEILKEDYKIRKFFENDWGTLYNKAGVSKVEIKRKVNQLELLIHAARPKAIAGTADEESTFSTLRAQIKKLTNNPKQTRIKVIQVNKMETESVLVARALAEQLEKRVAFKRAIRLVAQRLQKSGTKGFKIQVSGRLNGAEMARDEWVREGRVPLQTLRADISYATARAYTTYGVLGIKVWIFNKEII</sequence>
<accession>Q4G359</accession>
<proteinExistence type="inferred from homology"/>
<protein>
    <recommendedName>
        <fullName evidence="2">Small ribosomal subunit protein uS3c</fullName>
    </recommendedName>
    <alternativeName>
        <fullName>30S ribosomal protein S3, chloroplastic</fullName>
    </alternativeName>
</protein>
<geneLocation type="chloroplast"/>
<reference key="1">
    <citation type="journal article" date="2005" name="DNA Res.">
        <title>The complete plastid genome sequence of the haptophyte Emiliania huxleyi: a comparison to other plastid genomes.</title>
        <authorList>
            <person name="Sanchez-Puerta M.V."/>
            <person name="Bachvaroff T.R."/>
            <person name="Delwiche C.F."/>
        </authorList>
    </citation>
    <scope>NUCLEOTIDE SEQUENCE [LARGE SCALE GENOMIC DNA]</scope>
    <source>
        <strain>CCMP373 / CSIRO-CS-57 / BT6</strain>
    </source>
</reference>
<evidence type="ECO:0000250" key="1"/>
<evidence type="ECO:0000305" key="2"/>
<comment type="subunit">
    <text evidence="1">Part of the 30S ribosomal subunit.</text>
</comment>
<comment type="subcellular location">
    <subcellularLocation>
        <location>Plastid</location>
        <location>Chloroplast</location>
    </subcellularLocation>
</comment>
<comment type="similarity">
    <text evidence="2">Belongs to the universal ribosomal protein uS3 family.</text>
</comment>
<keyword id="KW-0150">Chloroplast</keyword>
<keyword id="KW-0934">Plastid</keyword>
<keyword id="KW-0687">Ribonucleoprotein</keyword>
<keyword id="KW-0689">Ribosomal protein</keyword>
<keyword id="KW-0694">RNA-binding</keyword>
<keyword id="KW-0699">rRNA-binding</keyword>
<organism>
    <name type="scientific">Emiliania huxleyi</name>
    <name type="common">Coccolithophore</name>
    <name type="synonym">Pontosphaera huxleyi</name>
    <dbReference type="NCBI Taxonomy" id="2903"/>
    <lineage>
        <taxon>Eukaryota</taxon>
        <taxon>Haptista</taxon>
        <taxon>Haptophyta</taxon>
        <taxon>Prymnesiophyceae</taxon>
        <taxon>Isochrysidales</taxon>
        <taxon>Noelaerhabdaceae</taxon>
        <taxon>Emiliania</taxon>
    </lineage>
</organism>
<feature type="chain" id="PRO_0000230749" description="Small ribosomal subunit protein uS3c">
    <location>
        <begin position="1"/>
        <end position="216"/>
    </location>
</feature>
<feature type="domain" description="KH type-2">
    <location>
        <begin position="43"/>
        <end position="115"/>
    </location>
</feature>
<name>RR3_EMIHU</name>
<gene>
    <name type="primary">rps3</name>
</gene>
<dbReference type="EMBL" id="AY741371">
    <property type="protein sequence ID" value="AAX13907.1"/>
    <property type="molecule type" value="Genomic_DNA"/>
</dbReference>
<dbReference type="RefSeq" id="YP_277408.1">
    <property type="nucleotide sequence ID" value="NC_007288.1"/>
</dbReference>
<dbReference type="SMR" id="Q4G359"/>
<dbReference type="STRING" id="2903.Q4G359"/>
<dbReference type="GeneID" id="3562492"/>
<dbReference type="GO" id="GO:0009507">
    <property type="term" value="C:chloroplast"/>
    <property type="evidence" value="ECO:0007669"/>
    <property type="project" value="UniProtKB-SubCell"/>
</dbReference>
<dbReference type="GO" id="GO:0022627">
    <property type="term" value="C:cytosolic small ribosomal subunit"/>
    <property type="evidence" value="ECO:0007669"/>
    <property type="project" value="TreeGrafter"/>
</dbReference>
<dbReference type="GO" id="GO:0019843">
    <property type="term" value="F:rRNA binding"/>
    <property type="evidence" value="ECO:0007669"/>
    <property type="project" value="UniProtKB-KW"/>
</dbReference>
<dbReference type="GO" id="GO:0003735">
    <property type="term" value="F:structural constituent of ribosome"/>
    <property type="evidence" value="ECO:0007669"/>
    <property type="project" value="InterPro"/>
</dbReference>
<dbReference type="GO" id="GO:0006412">
    <property type="term" value="P:translation"/>
    <property type="evidence" value="ECO:0007669"/>
    <property type="project" value="UniProtKB-UniRule"/>
</dbReference>
<dbReference type="CDD" id="cd02412">
    <property type="entry name" value="KH-II_30S_S3"/>
    <property type="match status" value="1"/>
</dbReference>
<dbReference type="FunFam" id="3.30.300.20:FF:000001">
    <property type="entry name" value="30S ribosomal protein S3"/>
    <property type="match status" value="1"/>
</dbReference>
<dbReference type="Gene3D" id="3.30.300.20">
    <property type="match status" value="1"/>
</dbReference>
<dbReference type="Gene3D" id="3.30.1140.32">
    <property type="entry name" value="Ribosomal protein S3, C-terminal domain"/>
    <property type="match status" value="1"/>
</dbReference>
<dbReference type="HAMAP" id="MF_01309_B">
    <property type="entry name" value="Ribosomal_uS3_B"/>
    <property type="match status" value="1"/>
</dbReference>
<dbReference type="InterPro" id="IPR015946">
    <property type="entry name" value="KH_dom-like_a/b"/>
</dbReference>
<dbReference type="InterPro" id="IPR009019">
    <property type="entry name" value="KH_sf_prok-type"/>
</dbReference>
<dbReference type="InterPro" id="IPR036419">
    <property type="entry name" value="Ribosomal_S3_C_sf"/>
</dbReference>
<dbReference type="InterPro" id="IPR005704">
    <property type="entry name" value="Ribosomal_uS3_bac-typ"/>
</dbReference>
<dbReference type="InterPro" id="IPR001351">
    <property type="entry name" value="Ribosomal_uS3_C"/>
</dbReference>
<dbReference type="NCBIfam" id="TIGR01009">
    <property type="entry name" value="rpsC_bact"/>
    <property type="match status" value="1"/>
</dbReference>
<dbReference type="PANTHER" id="PTHR11760">
    <property type="entry name" value="30S/40S RIBOSOMAL PROTEIN S3"/>
    <property type="match status" value="1"/>
</dbReference>
<dbReference type="PANTHER" id="PTHR11760:SF19">
    <property type="entry name" value="SMALL RIBOSOMAL SUBUNIT PROTEIN US3C"/>
    <property type="match status" value="1"/>
</dbReference>
<dbReference type="Pfam" id="PF00189">
    <property type="entry name" value="Ribosomal_S3_C"/>
    <property type="match status" value="1"/>
</dbReference>
<dbReference type="SUPFAM" id="SSF54814">
    <property type="entry name" value="Prokaryotic type KH domain (KH-domain type II)"/>
    <property type="match status" value="1"/>
</dbReference>
<dbReference type="SUPFAM" id="SSF54821">
    <property type="entry name" value="Ribosomal protein S3 C-terminal domain"/>
    <property type="match status" value="1"/>
</dbReference>